<sequence>MEFTLQQDKVRALDDDMLVVKSESGGAGLDRGDDESQYPHGLKLAVLMTCVFIGMFLVALDKLIISTATPAITNEFHAYSDVGWYGTAYLLTNCATILLFGKLYTFLDVKATFLSAVLLFEVGSAVCGAAPNSIAFIVGRAIAGLGAGGIQEGVLVIIVCAIPLSKRPAYQGLFGAVYGVSSVIGPLLGGAFTTHVSWRWCFYINLPFGGLVALAVFFLLKVPGGGAMKSSWKHKVKELNIEGLVALLPGVISLCLALQWGGFTYSWSNWRIILCLTLGLVLLIAFIFIQVWRPKTATVPPHIFCQRSIFTGFWVSALLGAHQTIIIYFLPIWFQAIKGDSAVQSGIHLLPFVIAIVVSSILTGVGTTKTGYYTPFLIIGTVTAAIGAGLFLLLQPHTTTGQWIGYQIVYGFGLGGCYQAPNVAAQTVLSKDEAPVGTALILFATTLFGAIFVSVGQNVLDQQLATKLAGLAGFDITPQQINTAGVTGLFQMVPQGLHNAVLYAYNSALRRTFLVGLILACLTILGSLGMEWRSVKKEQQKQQEKAMENEQEEAAKTQKHKYALDTDENFGV</sequence>
<organism>
    <name type="scientific">Pseudocercospora fijiensis (strain CIRAD86)</name>
    <name type="common">Black leaf streak disease fungus</name>
    <name type="synonym">Mycosphaerella fijiensis</name>
    <dbReference type="NCBI Taxonomy" id="383855"/>
    <lineage>
        <taxon>Eukaryota</taxon>
        <taxon>Fungi</taxon>
        <taxon>Dikarya</taxon>
        <taxon>Ascomycota</taxon>
        <taxon>Pezizomycotina</taxon>
        <taxon>Dothideomycetes</taxon>
        <taxon>Dothideomycetidae</taxon>
        <taxon>Mycosphaerellales</taxon>
        <taxon>Mycosphaerellaceae</taxon>
        <taxon>Pseudocercospora</taxon>
    </lineage>
</organism>
<dbReference type="EMBL" id="KB446562">
    <property type="protein sequence ID" value="EME79060.1"/>
    <property type="molecule type" value="Genomic_DNA"/>
</dbReference>
<dbReference type="RefSeq" id="XP_007929884.1">
    <property type="nucleotide sequence ID" value="XM_007931693.1"/>
</dbReference>
<dbReference type="SMR" id="M2YMU2"/>
<dbReference type="GeneID" id="19335128"/>
<dbReference type="KEGG" id="pfj:MYCFIDRAFT_190113"/>
<dbReference type="VEuPathDB" id="FungiDB:MYCFIDRAFT_190113"/>
<dbReference type="eggNOG" id="KOG0254">
    <property type="taxonomic scope" value="Eukaryota"/>
</dbReference>
<dbReference type="HOGENOM" id="CLU_000960_22_1_1"/>
<dbReference type="OrthoDB" id="10021397at2759"/>
<dbReference type="Proteomes" id="UP000016932">
    <property type="component" value="Unassembled WGS sequence"/>
</dbReference>
<dbReference type="GO" id="GO:0005886">
    <property type="term" value="C:plasma membrane"/>
    <property type="evidence" value="ECO:0007669"/>
    <property type="project" value="TreeGrafter"/>
</dbReference>
<dbReference type="GO" id="GO:0022857">
    <property type="term" value="F:transmembrane transporter activity"/>
    <property type="evidence" value="ECO:0007669"/>
    <property type="project" value="InterPro"/>
</dbReference>
<dbReference type="CDD" id="cd17502">
    <property type="entry name" value="MFS_Azr1_MDR_like"/>
    <property type="match status" value="1"/>
</dbReference>
<dbReference type="FunFam" id="1.20.1250.20:FF:000196">
    <property type="entry name" value="MFS toxin efflux pump (AflT)"/>
    <property type="match status" value="1"/>
</dbReference>
<dbReference type="FunFam" id="1.20.1720.10:FF:000012">
    <property type="entry name" value="MFS toxin efflux pump (AflT)"/>
    <property type="match status" value="1"/>
</dbReference>
<dbReference type="Gene3D" id="1.20.1250.20">
    <property type="entry name" value="MFS general substrate transporter like domains"/>
    <property type="match status" value="2"/>
</dbReference>
<dbReference type="InterPro" id="IPR011701">
    <property type="entry name" value="MFS"/>
</dbReference>
<dbReference type="InterPro" id="IPR020846">
    <property type="entry name" value="MFS_dom"/>
</dbReference>
<dbReference type="InterPro" id="IPR036259">
    <property type="entry name" value="MFS_trans_sf"/>
</dbReference>
<dbReference type="PANTHER" id="PTHR23501:SF153">
    <property type="entry name" value="AFLATOXIN EFFLUX PUMP, PUTATIVE-RELATED"/>
    <property type="match status" value="1"/>
</dbReference>
<dbReference type="PANTHER" id="PTHR23501">
    <property type="entry name" value="MAJOR FACILITATOR SUPERFAMILY"/>
    <property type="match status" value="1"/>
</dbReference>
<dbReference type="Pfam" id="PF07690">
    <property type="entry name" value="MFS_1"/>
    <property type="match status" value="1"/>
</dbReference>
<dbReference type="SUPFAM" id="SSF103473">
    <property type="entry name" value="MFS general substrate transporter"/>
    <property type="match status" value="1"/>
</dbReference>
<dbReference type="PROSITE" id="PS50850">
    <property type="entry name" value="MFS"/>
    <property type="match status" value="1"/>
</dbReference>
<keyword id="KW-0472">Membrane</keyword>
<keyword id="KW-1185">Reference proteome</keyword>
<keyword id="KW-0812">Transmembrane</keyword>
<keyword id="KW-1133">Transmembrane helix</keyword>
<accession>M2YMU2</accession>
<name>PK81F_PSEFD</name>
<feature type="chain" id="PRO_0000451123" description="MFS-type transporter MYCFIDRAFT_190113">
    <location>
        <begin position="1"/>
        <end position="572"/>
    </location>
</feature>
<feature type="transmembrane region" description="Helical" evidence="1">
    <location>
        <begin position="45"/>
        <end position="65"/>
    </location>
</feature>
<feature type="transmembrane region" description="Helical" evidence="1">
    <location>
        <begin position="81"/>
        <end position="101"/>
    </location>
</feature>
<feature type="transmembrane region" description="Helical" evidence="1">
    <location>
        <begin position="117"/>
        <end position="137"/>
    </location>
</feature>
<feature type="transmembrane region" description="Helical" evidence="1">
    <location>
        <begin position="142"/>
        <end position="162"/>
    </location>
</feature>
<feature type="transmembrane region" description="Helical" evidence="1">
    <location>
        <begin position="172"/>
        <end position="192"/>
    </location>
</feature>
<feature type="transmembrane region" description="Helical" evidence="1">
    <location>
        <begin position="200"/>
        <end position="220"/>
    </location>
</feature>
<feature type="transmembrane region" description="Helical" evidence="1">
    <location>
        <begin position="243"/>
        <end position="263"/>
    </location>
</feature>
<feature type="transmembrane region" description="Helical" evidence="1">
    <location>
        <begin position="272"/>
        <end position="292"/>
    </location>
</feature>
<feature type="transmembrane region" description="Helical" evidence="1">
    <location>
        <begin position="313"/>
        <end position="333"/>
    </location>
</feature>
<feature type="transmembrane region" description="Helical" evidence="1">
    <location>
        <begin position="346"/>
        <end position="366"/>
    </location>
</feature>
<feature type="transmembrane region" description="Helical" evidence="1">
    <location>
        <begin position="374"/>
        <end position="394"/>
    </location>
</feature>
<feature type="transmembrane region" description="Helical" evidence="1">
    <location>
        <begin position="403"/>
        <end position="423"/>
    </location>
</feature>
<feature type="transmembrane region" description="Helical" evidence="1">
    <location>
        <begin position="436"/>
        <end position="456"/>
    </location>
</feature>
<feature type="transmembrane region" description="Helical" evidence="1">
    <location>
        <begin position="512"/>
        <end position="532"/>
    </location>
</feature>
<feature type="region of interest" description="Disordered" evidence="2">
    <location>
        <begin position="539"/>
        <end position="572"/>
    </location>
</feature>
<feature type="compositionally biased region" description="Basic and acidic residues" evidence="2">
    <location>
        <begin position="539"/>
        <end position="556"/>
    </location>
</feature>
<reference key="1">
    <citation type="journal article" date="2012" name="PLoS Pathog.">
        <title>Diverse lifestyles and strategies of plant pathogenesis encoded in the genomes of eighteen Dothideomycetes fungi.</title>
        <authorList>
            <person name="Ohm R.A."/>
            <person name="Feau N."/>
            <person name="Henrissat B."/>
            <person name="Schoch C.L."/>
            <person name="Horwitz B.A."/>
            <person name="Barry K.W."/>
            <person name="Condon B.J."/>
            <person name="Copeland A.C."/>
            <person name="Dhillon B."/>
            <person name="Glaser F."/>
            <person name="Hesse C.N."/>
            <person name="Kosti I."/>
            <person name="LaButti K."/>
            <person name="Lindquist E.A."/>
            <person name="Lucas S."/>
            <person name="Salamov A.A."/>
            <person name="Bradshaw R.E."/>
            <person name="Ciuffetti L."/>
            <person name="Hamelin R.C."/>
            <person name="Kema G.H.J."/>
            <person name="Lawrence C."/>
            <person name="Scott J.A."/>
            <person name="Spatafora J.W."/>
            <person name="Turgeon B.G."/>
            <person name="de Wit P.J.G.M."/>
            <person name="Zhong S."/>
            <person name="Goodwin S.B."/>
            <person name="Grigoriev I.V."/>
        </authorList>
    </citation>
    <scope>NUCLEOTIDE SEQUENCE [LARGE SCALE GENOMIC DNA]</scope>
    <source>
        <strain>CIRAD86</strain>
    </source>
</reference>
<reference key="2">
    <citation type="journal article" date="2016" name="PLoS ONE">
        <title>Bioinformatics prediction of polyketide synthase gene clusters from Mycosphaerella fijiensis.</title>
        <authorList>
            <person name="Noar R.D."/>
            <person name="Daub M.E."/>
        </authorList>
    </citation>
    <scope>IDENTIFICATION</scope>
    <scope>FUNCTION</scope>
</reference>
<reference key="3">
    <citation type="journal article" date="2019" name="PLoS ONE">
        <title>A novel polyketide synthase gene cluster in the plant pathogenic fungus Pseudocercospora fijiensis.</title>
        <authorList>
            <person name="Noar R.D."/>
            <person name="Thomas E."/>
            <person name="Daub M.E."/>
        </authorList>
    </citation>
    <scope>FUNCTION</scope>
</reference>
<comment type="function">
    <text evidence="3 4">MFS-type transporter; part of the gene cluster that mediates the biosynthesis of an emodin derivative that may be involved in black Sigatoka disease of banana.</text>
</comment>
<comment type="subcellular location">
    <subcellularLocation>
        <location evidence="1">Membrane</location>
        <topology evidence="1">Multi-pass membrane protein</topology>
    </subcellularLocation>
</comment>
<comment type="similarity">
    <text evidence="6">Belongs to the major facilitator superfamily. TCR/Tet family.</text>
</comment>
<protein>
    <recommendedName>
        <fullName evidence="5">MFS-type transporter MYCFIDRAFT_190113</fullName>
    </recommendedName>
    <alternativeName>
        <fullName evidence="5">PKS8-1 gene cluster protein MYCFIDRAFT_190113</fullName>
    </alternativeName>
</protein>
<proteinExistence type="inferred from homology"/>
<evidence type="ECO:0000255" key="1"/>
<evidence type="ECO:0000256" key="2">
    <source>
        <dbReference type="SAM" id="MobiDB-lite"/>
    </source>
</evidence>
<evidence type="ECO:0000269" key="3">
    <source>
    </source>
</evidence>
<evidence type="ECO:0000269" key="4">
    <source>
    </source>
</evidence>
<evidence type="ECO:0000303" key="5">
    <source>
    </source>
</evidence>
<evidence type="ECO:0000305" key="6"/>
<gene>
    <name type="ORF">MYCFIDRAFT_190113</name>
</gene>